<evidence type="ECO:0000255" key="1">
    <source>
        <dbReference type="HAMAP-Rule" id="MF_00435"/>
    </source>
</evidence>
<evidence type="ECO:0000255" key="2">
    <source>
        <dbReference type="PROSITE-ProRule" id="PRU01197"/>
    </source>
</evidence>
<evidence type="ECO:0000255" key="3">
    <source>
        <dbReference type="PROSITE-ProRule" id="PRU01198"/>
    </source>
</evidence>
<dbReference type="EC" id="1.1.1.86" evidence="1"/>
<dbReference type="EMBL" id="BA000004">
    <property type="protein sequence ID" value="BAB06778.1"/>
    <property type="molecule type" value="Genomic_DNA"/>
</dbReference>
<dbReference type="PIR" id="C84032">
    <property type="entry name" value="C84032"/>
</dbReference>
<dbReference type="RefSeq" id="WP_010899203.1">
    <property type="nucleotide sequence ID" value="NC_002570.2"/>
</dbReference>
<dbReference type="SMR" id="Q9K8E7"/>
<dbReference type="STRING" id="272558.gene:10728969"/>
<dbReference type="GeneID" id="87598581"/>
<dbReference type="KEGG" id="bha:BH3059"/>
<dbReference type="eggNOG" id="COG0059">
    <property type="taxonomic scope" value="Bacteria"/>
</dbReference>
<dbReference type="HOGENOM" id="CLU_033821_0_1_9"/>
<dbReference type="OrthoDB" id="9804088at2"/>
<dbReference type="UniPathway" id="UPA00047">
    <property type="reaction ID" value="UER00056"/>
</dbReference>
<dbReference type="UniPathway" id="UPA00049">
    <property type="reaction ID" value="UER00060"/>
</dbReference>
<dbReference type="Proteomes" id="UP000001258">
    <property type="component" value="Chromosome"/>
</dbReference>
<dbReference type="GO" id="GO:0005829">
    <property type="term" value="C:cytosol"/>
    <property type="evidence" value="ECO:0007669"/>
    <property type="project" value="TreeGrafter"/>
</dbReference>
<dbReference type="GO" id="GO:0004455">
    <property type="term" value="F:ketol-acid reductoisomerase activity"/>
    <property type="evidence" value="ECO:0007669"/>
    <property type="project" value="UniProtKB-UniRule"/>
</dbReference>
<dbReference type="GO" id="GO:0000287">
    <property type="term" value="F:magnesium ion binding"/>
    <property type="evidence" value="ECO:0007669"/>
    <property type="project" value="UniProtKB-UniRule"/>
</dbReference>
<dbReference type="GO" id="GO:0050661">
    <property type="term" value="F:NADP binding"/>
    <property type="evidence" value="ECO:0007669"/>
    <property type="project" value="InterPro"/>
</dbReference>
<dbReference type="GO" id="GO:0009097">
    <property type="term" value="P:isoleucine biosynthetic process"/>
    <property type="evidence" value="ECO:0007669"/>
    <property type="project" value="UniProtKB-UniRule"/>
</dbReference>
<dbReference type="GO" id="GO:0009099">
    <property type="term" value="P:L-valine biosynthetic process"/>
    <property type="evidence" value="ECO:0007669"/>
    <property type="project" value="UniProtKB-UniRule"/>
</dbReference>
<dbReference type="FunFam" id="3.40.50.720:FF:000023">
    <property type="entry name" value="Ketol-acid reductoisomerase (NADP(+))"/>
    <property type="match status" value="1"/>
</dbReference>
<dbReference type="Gene3D" id="6.10.240.10">
    <property type="match status" value="1"/>
</dbReference>
<dbReference type="Gene3D" id="3.40.50.720">
    <property type="entry name" value="NAD(P)-binding Rossmann-like Domain"/>
    <property type="match status" value="1"/>
</dbReference>
<dbReference type="HAMAP" id="MF_00435">
    <property type="entry name" value="IlvC"/>
    <property type="match status" value="1"/>
</dbReference>
<dbReference type="InterPro" id="IPR008927">
    <property type="entry name" value="6-PGluconate_DH-like_C_sf"/>
</dbReference>
<dbReference type="InterPro" id="IPR013023">
    <property type="entry name" value="KARI"/>
</dbReference>
<dbReference type="InterPro" id="IPR000506">
    <property type="entry name" value="KARI_C"/>
</dbReference>
<dbReference type="InterPro" id="IPR013116">
    <property type="entry name" value="KARI_N"/>
</dbReference>
<dbReference type="InterPro" id="IPR014359">
    <property type="entry name" value="KARI_prok"/>
</dbReference>
<dbReference type="InterPro" id="IPR036291">
    <property type="entry name" value="NAD(P)-bd_dom_sf"/>
</dbReference>
<dbReference type="NCBIfam" id="TIGR00465">
    <property type="entry name" value="ilvC"/>
    <property type="match status" value="1"/>
</dbReference>
<dbReference type="NCBIfam" id="NF004017">
    <property type="entry name" value="PRK05479.1"/>
    <property type="match status" value="1"/>
</dbReference>
<dbReference type="NCBIfam" id="NF009940">
    <property type="entry name" value="PRK13403.1"/>
    <property type="match status" value="1"/>
</dbReference>
<dbReference type="PANTHER" id="PTHR21371">
    <property type="entry name" value="KETOL-ACID REDUCTOISOMERASE, MITOCHONDRIAL"/>
    <property type="match status" value="1"/>
</dbReference>
<dbReference type="PANTHER" id="PTHR21371:SF1">
    <property type="entry name" value="KETOL-ACID REDUCTOISOMERASE, MITOCHONDRIAL"/>
    <property type="match status" value="1"/>
</dbReference>
<dbReference type="Pfam" id="PF01450">
    <property type="entry name" value="KARI_C"/>
    <property type="match status" value="1"/>
</dbReference>
<dbReference type="Pfam" id="PF07991">
    <property type="entry name" value="KARI_N"/>
    <property type="match status" value="1"/>
</dbReference>
<dbReference type="PIRSF" id="PIRSF000116">
    <property type="entry name" value="IlvC_gammaproteo"/>
    <property type="match status" value="1"/>
</dbReference>
<dbReference type="SUPFAM" id="SSF48179">
    <property type="entry name" value="6-phosphogluconate dehydrogenase C-terminal domain-like"/>
    <property type="match status" value="1"/>
</dbReference>
<dbReference type="SUPFAM" id="SSF51735">
    <property type="entry name" value="NAD(P)-binding Rossmann-fold domains"/>
    <property type="match status" value="1"/>
</dbReference>
<dbReference type="PROSITE" id="PS51851">
    <property type="entry name" value="KARI_C"/>
    <property type="match status" value="1"/>
</dbReference>
<dbReference type="PROSITE" id="PS51850">
    <property type="entry name" value="KARI_N"/>
    <property type="match status" value="1"/>
</dbReference>
<reference key="1">
    <citation type="journal article" date="2000" name="Nucleic Acids Res.">
        <title>Complete genome sequence of the alkaliphilic bacterium Bacillus halodurans and genomic sequence comparison with Bacillus subtilis.</title>
        <authorList>
            <person name="Takami H."/>
            <person name="Nakasone K."/>
            <person name="Takaki Y."/>
            <person name="Maeno G."/>
            <person name="Sasaki R."/>
            <person name="Masui N."/>
            <person name="Fuji F."/>
            <person name="Hirama C."/>
            <person name="Nakamura Y."/>
            <person name="Ogasawara N."/>
            <person name="Kuhara S."/>
            <person name="Horikoshi K."/>
        </authorList>
    </citation>
    <scope>NUCLEOTIDE SEQUENCE [LARGE SCALE GENOMIC DNA]</scope>
    <source>
        <strain>ATCC BAA-125 / DSM 18197 / FERM 7344 / JCM 9153 / C-125</strain>
    </source>
</reference>
<sequence>MAKVFYNGDINEGVLQGKTVAIIGYGSQGHAHAQNLRDSGQEVIVGLRPGKSWDKAAEDGFQVYSVREAASRADVIMILLPDEHQPTVYKNEIEPELSEGKTLAFAHGFNVHFNQIVPPATVDVFLAAPKGPGHLVRRTYVDGAGVPGLVAVYQDATGQAKDIALAYSKMNGSARAGVIETTFQEETETDLFGEQAVLCGGTSALVKAGFETLVEAGYQPEVAYFECLHELKLIVDLMYEGGLEYMRYSISDTAQWGDFQAGPRVVTAETKQAMKDILSDIQTGKFAKGWILENQANRPEFTAINEREKNHPLEVVGRELREMMPFVKAKSKGVVGSAKN</sequence>
<proteinExistence type="inferred from homology"/>
<keyword id="KW-0028">Amino-acid biosynthesis</keyword>
<keyword id="KW-0100">Branched-chain amino acid biosynthesis</keyword>
<keyword id="KW-0460">Magnesium</keyword>
<keyword id="KW-0479">Metal-binding</keyword>
<keyword id="KW-0521">NADP</keyword>
<keyword id="KW-0560">Oxidoreductase</keyword>
<keyword id="KW-1185">Reference proteome</keyword>
<accession>Q9K8E7</accession>
<name>ILVC_HALH5</name>
<feature type="chain" id="PRO_0000151276" description="Ketol-acid reductoisomerase (NADP(+))">
    <location>
        <begin position="1"/>
        <end position="340"/>
    </location>
</feature>
<feature type="domain" description="KARI N-terminal Rossmann" evidence="2">
    <location>
        <begin position="2"/>
        <end position="181"/>
    </location>
</feature>
<feature type="domain" description="KARI C-terminal knotted" evidence="3">
    <location>
        <begin position="182"/>
        <end position="327"/>
    </location>
</feature>
<feature type="active site" evidence="1">
    <location>
        <position position="107"/>
    </location>
</feature>
<feature type="binding site" evidence="1">
    <location>
        <begin position="25"/>
        <end position="28"/>
    </location>
    <ligand>
        <name>NADP(+)</name>
        <dbReference type="ChEBI" id="CHEBI:58349"/>
    </ligand>
</feature>
<feature type="binding site" evidence="1">
    <location>
        <position position="48"/>
    </location>
    <ligand>
        <name>NADP(+)</name>
        <dbReference type="ChEBI" id="CHEBI:58349"/>
    </ligand>
</feature>
<feature type="binding site" evidence="1">
    <location>
        <position position="52"/>
    </location>
    <ligand>
        <name>NADP(+)</name>
        <dbReference type="ChEBI" id="CHEBI:58349"/>
    </ligand>
</feature>
<feature type="binding site" evidence="1">
    <location>
        <begin position="82"/>
        <end position="85"/>
    </location>
    <ligand>
        <name>NADP(+)</name>
        <dbReference type="ChEBI" id="CHEBI:58349"/>
    </ligand>
</feature>
<feature type="binding site" evidence="1">
    <location>
        <position position="133"/>
    </location>
    <ligand>
        <name>NADP(+)</name>
        <dbReference type="ChEBI" id="CHEBI:58349"/>
    </ligand>
</feature>
<feature type="binding site" evidence="1">
    <location>
        <position position="190"/>
    </location>
    <ligand>
        <name>Mg(2+)</name>
        <dbReference type="ChEBI" id="CHEBI:18420"/>
        <label>1</label>
    </ligand>
</feature>
<feature type="binding site" evidence="1">
    <location>
        <position position="190"/>
    </location>
    <ligand>
        <name>Mg(2+)</name>
        <dbReference type="ChEBI" id="CHEBI:18420"/>
        <label>2</label>
    </ligand>
</feature>
<feature type="binding site" evidence="1">
    <location>
        <position position="194"/>
    </location>
    <ligand>
        <name>Mg(2+)</name>
        <dbReference type="ChEBI" id="CHEBI:18420"/>
        <label>1</label>
    </ligand>
</feature>
<feature type="binding site" evidence="1">
    <location>
        <position position="226"/>
    </location>
    <ligand>
        <name>Mg(2+)</name>
        <dbReference type="ChEBI" id="CHEBI:18420"/>
        <label>2</label>
    </ligand>
</feature>
<feature type="binding site" evidence="1">
    <location>
        <position position="230"/>
    </location>
    <ligand>
        <name>Mg(2+)</name>
        <dbReference type="ChEBI" id="CHEBI:18420"/>
        <label>2</label>
    </ligand>
</feature>
<feature type="binding site" evidence="1">
    <location>
        <position position="251"/>
    </location>
    <ligand>
        <name>substrate</name>
    </ligand>
</feature>
<protein>
    <recommendedName>
        <fullName evidence="1">Ketol-acid reductoisomerase (NADP(+))</fullName>
        <shortName evidence="1">KARI</shortName>
        <ecNumber evidence="1">1.1.1.86</ecNumber>
    </recommendedName>
    <alternativeName>
        <fullName evidence="1">Acetohydroxy-acid isomeroreductase</fullName>
        <shortName evidence="1">AHIR</shortName>
    </alternativeName>
    <alternativeName>
        <fullName evidence="1">Alpha-keto-beta-hydroxylacyl reductoisomerase</fullName>
    </alternativeName>
    <alternativeName>
        <fullName evidence="1">Ketol-acid reductoisomerase type 1</fullName>
    </alternativeName>
    <alternativeName>
        <fullName evidence="1">Ketol-acid reductoisomerase type I</fullName>
    </alternativeName>
</protein>
<gene>
    <name evidence="1" type="primary">ilvC</name>
    <name type="ordered locus">BH3059</name>
</gene>
<organism>
    <name type="scientific">Halalkalibacterium halodurans (strain ATCC BAA-125 / DSM 18197 / FERM 7344 / JCM 9153 / C-125)</name>
    <name type="common">Bacillus halodurans</name>
    <dbReference type="NCBI Taxonomy" id="272558"/>
    <lineage>
        <taxon>Bacteria</taxon>
        <taxon>Bacillati</taxon>
        <taxon>Bacillota</taxon>
        <taxon>Bacilli</taxon>
        <taxon>Bacillales</taxon>
        <taxon>Bacillaceae</taxon>
        <taxon>Halalkalibacterium (ex Joshi et al. 2022)</taxon>
    </lineage>
</organism>
<comment type="function">
    <text evidence="1">Involved in the biosynthesis of branched-chain amino acids (BCAA). Catalyzes an alkyl-migration followed by a ketol-acid reduction of (S)-2-acetolactate (S2AL) to yield (R)-2,3-dihydroxy-isovalerate. In the isomerase reaction, S2AL is rearranged via a Mg-dependent methyl migration to produce 3-hydroxy-3-methyl-2-ketobutyrate (HMKB). In the reductase reaction, this 2-ketoacid undergoes a metal-dependent reduction by NADPH to yield (R)-2,3-dihydroxy-isovalerate.</text>
</comment>
<comment type="catalytic activity">
    <reaction evidence="1">
        <text>(2R)-2,3-dihydroxy-3-methylbutanoate + NADP(+) = (2S)-2-acetolactate + NADPH + H(+)</text>
        <dbReference type="Rhea" id="RHEA:22068"/>
        <dbReference type="ChEBI" id="CHEBI:15378"/>
        <dbReference type="ChEBI" id="CHEBI:49072"/>
        <dbReference type="ChEBI" id="CHEBI:57783"/>
        <dbReference type="ChEBI" id="CHEBI:58349"/>
        <dbReference type="ChEBI" id="CHEBI:58476"/>
        <dbReference type="EC" id="1.1.1.86"/>
    </reaction>
</comment>
<comment type="catalytic activity">
    <reaction evidence="1">
        <text>(2R,3R)-2,3-dihydroxy-3-methylpentanoate + NADP(+) = (S)-2-ethyl-2-hydroxy-3-oxobutanoate + NADPH + H(+)</text>
        <dbReference type="Rhea" id="RHEA:13493"/>
        <dbReference type="ChEBI" id="CHEBI:15378"/>
        <dbReference type="ChEBI" id="CHEBI:49256"/>
        <dbReference type="ChEBI" id="CHEBI:49258"/>
        <dbReference type="ChEBI" id="CHEBI:57783"/>
        <dbReference type="ChEBI" id="CHEBI:58349"/>
        <dbReference type="EC" id="1.1.1.86"/>
    </reaction>
</comment>
<comment type="cofactor">
    <cofactor evidence="1">
        <name>Mg(2+)</name>
        <dbReference type="ChEBI" id="CHEBI:18420"/>
    </cofactor>
    <text evidence="1">Binds 2 magnesium ions per subunit.</text>
</comment>
<comment type="pathway">
    <text evidence="1">Amino-acid biosynthesis; L-isoleucine biosynthesis; L-isoleucine from 2-oxobutanoate: step 2/4.</text>
</comment>
<comment type="pathway">
    <text evidence="1">Amino-acid biosynthesis; L-valine biosynthesis; L-valine from pyruvate: step 2/4.</text>
</comment>
<comment type="similarity">
    <text evidence="1">Belongs to the ketol-acid reductoisomerase family.</text>
</comment>